<organism>
    <name type="scientific">Clostridium botulinum (strain Langeland / NCTC 10281 / Type F)</name>
    <dbReference type="NCBI Taxonomy" id="441772"/>
    <lineage>
        <taxon>Bacteria</taxon>
        <taxon>Bacillati</taxon>
        <taxon>Bacillota</taxon>
        <taxon>Clostridia</taxon>
        <taxon>Eubacteriales</taxon>
        <taxon>Clostridiaceae</taxon>
        <taxon>Clostridium</taxon>
    </lineage>
</organism>
<proteinExistence type="inferred from homology"/>
<comment type="catalytic activity">
    <reaction evidence="1">
        <text>tRNA(Leu) + L-leucine + ATP = L-leucyl-tRNA(Leu) + AMP + diphosphate</text>
        <dbReference type="Rhea" id="RHEA:11688"/>
        <dbReference type="Rhea" id="RHEA-COMP:9613"/>
        <dbReference type="Rhea" id="RHEA-COMP:9622"/>
        <dbReference type="ChEBI" id="CHEBI:30616"/>
        <dbReference type="ChEBI" id="CHEBI:33019"/>
        <dbReference type="ChEBI" id="CHEBI:57427"/>
        <dbReference type="ChEBI" id="CHEBI:78442"/>
        <dbReference type="ChEBI" id="CHEBI:78494"/>
        <dbReference type="ChEBI" id="CHEBI:456215"/>
        <dbReference type="EC" id="6.1.1.4"/>
    </reaction>
</comment>
<comment type="subcellular location">
    <subcellularLocation>
        <location evidence="1">Cytoplasm</location>
    </subcellularLocation>
</comment>
<comment type="similarity">
    <text evidence="1">Belongs to the class-I aminoacyl-tRNA synthetase family.</text>
</comment>
<protein>
    <recommendedName>
        <fullName evidence="1">Leucine--tRNA ligase</fullName>
        <ecNumber evidence="1">6.1.1.4</ecNumber>
    </recommendedName>
    <alternativeName>
        <fullName evidence="1">Leucyl-tRNA synthetase</fullName>
        <shortName evidence="1">LeuRS</shortName>
    </alternativeName>
</protein>
<sequence>MGNYSTKIDEKWQKKWEENSLYKFNNDNLDKKLYVLEMFSYPSGSKLHAGHWFNYGPVDSWARFKRMQGYNVFQPMGFDAFGLPAENYAIKTGIHPKDSTFKNIETMETQLKAMGAMFNWENEVITCSPDYYKWTQWLFLKLYEKGLAYKKKAPVNWCPSCNTVLANEQVLDGKCERCDSNVDKKNLEQWFLKITDYADELLEKLDELDWPEKTKAMQKHWIGKSVGAEVTFNVADSDLSFNVFTTRVDTLFGVTYVVLAPENDLVDKLTTPENKAEVESYKTQAKNQSDIERQSITREKTGVFSGSYAINPINGKKVPIWIGDYVLNTYGTGCVMAVPAHDERDFAFATKYNLPIERVIEGGDSLPYTEYGKMVNSGEFDGLFGNKAKEAVISKLESMNLGRKKINYRLRDWLVSRQRYWGAPIPIIYCEKCGTVEVPIEQLPVELPYNVEFSPDGKSPLGKCDDFINTTCPKCGGPAKREADTLDTFVCSSWYYLRYPDNNNEKDAFNPELINKMLPVDKYVGGPEHACMHLLYARFITKALRDMGYLNFDEPFLSLTHQGLILGPDGLKMSKSKGNTISPDDYIKEFGADVFRMYLMFGFDYTEGGAWSDDAIKSIGKFVDRVERILENAREEIKNSKDNKSTMDKDEKELNYVRHHSIKSITEDIDKMQFNTSIARLMEFTNALSKYLGSDTLRNASFLRESIIDFITLLAPFAPHFAEEQWELIGINSSIFNEKWPEFDPKALIKDEVEIAVQVNGKIRAKINIYTSSSEDEIKESALNNDDIKNSIGDKEIKKVIVIKNRLVNIVAK</sequence>
<gene>
    <name evidence="1" type="primary">leuS</name>
    <name type="ordered locus">CLI_0249</name>
</gene>
<feature type="chain" id="PRO_1000009327" description="Leucine--tRNA ligase">
    <location>
        <begin position="1"/>
        <end position="813"/>
    </location>
</feature>
<feature type="short sequence motif" description="'HIGH' region">
    <location>
        <begin position="40"/>
        <end position="51"/>
    </location>
</feature>
<feature type="short sequence motif" description="'KMSKS' region">
    <location>
        <begin position="572"/>
        <end position="576"/>
    </location>
</feature>
<feature type="binding site" evidence="1">
    <location>
        <position position="575"/>
    </location>
    <ligand>
        <name>ATP</name>
        <dbReference type="ChEBI" id="CHEBI:30616"/>
    </ligand>
</feature>
<keyword id="KW-0030">Aminoacyl-tRNA synthetase</keyword>
<keyword id="KW-0067">ATP-binding</keyword>
<keyword id="KW-0963">Cytoplasm</keyword>
<keyword id="KW-0436">Ligase</keyword>
<keyword id="KW-0547">Nucleotide-binding</keyword>
<keyword id="KW-0648">Protein biosynthesis</keyword>
<reference key="1">
    <citation type="submission" date="2007-06" db="EMBL/GenBank/DDBJ databases">
        <authorList>
            <person name="Brinkac L.M."/>
            <person name="Daugherty S."/>
            <person name="Dodson R.J."/>
            <person name="Madupu R."/>
            <person name="Brown J.L."/>
            <person name="Bruce D."/>
            <person name="Detter C."/>
            <person name="Munk C."/>
            <person name="Smith L.A."/>
            <person name="Smith T.J."/>
            <person name="White O."/>
            <person name="Brettin T.S."/>
        </authorList>
    </citation>
    <scope>NUCLEOTIDE SEQUENCE [LARGE SCALE GENOMIC DNA]</scope>
    <source>
        <strain>Langeland / NCTC 10281 / Type F</strain>
    </source>
</reference>
<name>SYL_CLOBL</name>
<dbReference type="EC" id="6.1.1.4" evidence="1"/>
<dbReference type="EMBL" id="CP000728">
    <property type="protein sequence ID" value="ABS39371.1"/>
    <property type="molecule type" value="Genomic_DNA"/>
</dbReference>
<dbReference type="RefSeq" id="WP_011987262.1">
    <property type="nucleotide sequence ID" value="NC_009699.1"/>
</dbReference>
<dbReference type="SMR" id="A7G9T9"/>
<dbReference type="KEGG" id="cbf:CLI_0249"/>
<dbReference type="HOGENOM" id="CLU_004427_0_0_9"/>
<dbReference type="Proteomes" id="UP000002410">
    <property type="component" value="Chromosome"/>
</dbReference>
<dbReference type="GO" id="GO:0005829">
    <property type="term" value="C:cytosol"/>
    <property type="evidence" value="ECO:0007669"/>
    <property type="project" value="TreeGrafter"/>
</dbReference>
<dbReference type="GO" id="GO:0002161">
    <property type="term" value="F:aminoacyl-tRNA deacylase activity"/>
    <property type="evidence" value="ECO:0007669"/>
    <property type="project" value="InterPro"/>
</dbReference>
<dbReference type="GO" id="GO:0005524">
    <property type="term" value="F:ATP binding"/>
    <property type="evidence" value="ECO:0007669"/>
    <property type="project" value="UniProtKB-UniRule"/>
</dbReference>
<dbReference type="GO" id="GO:0004823">
    <property type="term" value="F:leucine-tRNA ligase activity"/>
    <property type="evidence" value="ECO:0007669"/>
    <property type="project" value="UniProtKB-UniRule"/>
</dbReference>
<dbReference type="GO" id="GO:0006429">
    <property type="term" value="P:leucyl-tRNA aminoacylation"/>
    <property type="evidence" value="ECO:0007669"/>
    <property type="project" value="UniProtKB-UniRule"/>
</dbReference>
<dbReference type="CDD" id="cd07958">
    <property type="entry name" value="Anticodon_Ia_Leu_BEm"/>
    <property type="match status" value="1"/>
</dbReference>
<dbReference type="CDD" id="cd00812">
    <property type="entry name" value="LeuRS_core"/>
    <property type="match status" value="1"/>
</dbReference>
<dbReference type="FunFam" id="1.10.730.10:FF:000002">
    <property type="entry name" value="Leucine--tRNA ligase"/>
    <property type="match status" value="1"/>
</dbReference>
<dbReference type="FunFam" id="3.10.20.590:FF:000001">
    <property type="entry name" value="Leucine--tRNA ligase"/>
    <property type="match status" value="1"/>
</dbReference>
<dbReference type="FunFam" id="3.40.50.620:FF:000003">
    <property type="entry name" value="Leucine--tRNA ligase"/>
    <property type="match status" value="1"/>
</dbReference>
<dbReference type="FunFam" id="3.40.50.620:FF:000056">
    <property type="entry name" value="Leucine--tRNA ligase"/>
    <property type="match status" value="1"/>
</dbReference>
<dbReference type="Gene3D" id="3.10.20.590">
    <property type="match status" value="1"/>
</dbReference>
<dbReference type="Gene3D" id="3.40.50.620">
    <property type="entry name" value="HUPs"/>
    <property type="match status" value="2"/>
</dbReference>
<dbReference type="Gene3D" id="1.10.730.10">
    <property type="entry name" value="Isoleucyl-tRNA Synthetase, Domain 1"/>
    <property type="match status" value="1"/>
</dbReference>
<dbReference type="HAMAP" id="MF_00049_B">
    <property type="entry name" value="Leu_tRNA_synth_B"/>
    <property type="match status" value="1"/>
</dbReference>
<dbReference type="InterPro" id="IPR002300">
    <property type="entry name" value="aa-tRNA-synth_Ia"/>
</dbReference>
<dbReference type="InterPro" id="IPR002302">
    <property type="entry name" value="Leu-tRNA-ligase"/>
</dbReference>
<dbReference type="InterPro" id="IPR025709">
    <property type="entry name" value="Leu_tRNA-synth_edit"/>
</dbReference>
<dbReference type="InterPro" id="IPR013155">
    <property type="entry name" value="M/V/L/I-tRNA-synth_anticd-bd"/>
</dbReference>
<dbReference type="InterPro" id="IPR015413">
    <property type="entry name" value="Methionyl/Leucyl_tRNA_Synth"/>
</dbReference>
<dbReference type="InterPro" id="IPR014729">
    <property type="entry name" value="Rossmann-like_a/b/a_fold"/>
</dbReference>
<dbReference type="InterPro" id="IPR009080">
    <property type="entry name" value="tRNAsynth_Ia_anticodon-bd"/>
</dbReference>
<dbReference type="InterPro" id="IPR009008">
    <property type="entry name" value="Val/Leu/Ile-tRNA-synth_edit"/>
</dbReference>
<dbReference type="NCBIfam" id="TIGR00396">
    <property type="entry name" value="leuS_bact"/>
    <property type="match status" value="1"/>
</dbReference>
<dbReference type="PANTHER" id="PTHR43740:SF2">
    <property type="entry name" value="LEUCINE--TRNA LIGASE, MITOCHONDRIAL"/>
    <property type="match status" value="1"/>
</dbReference>
<dbReference type="PANTHER" id="PTHR43740">
    <property type="entry name" value="LEUCYL-TRNA SYNTHETASE"/>
    <property type="match status" value="1"/>
</dbReference>
<dbReference type="Pfam" id="PF08264">
    <property type="entry name" value="Anticodon_1"/>
    <property type="match status" value="1"/>
</dbReference>
<dbReference type="Pfam" id="PF00133">
    <property type="entry name" value="tRNA-synt_1"/>
    <property type="match status" value="1"/>
</dbReference>
<dbReference type="Pfam" id="PF13603">
    <property type="entry name" value="tRNA-synt_1_2"/>
    <property type="match status" value="1"/>
</dbReference>
<dbReference type="Pfam" id="PF09334">
    <property type="entry name" value="tRNA-synt_1g"/>
    <property type="match status" value="1"/>
</dbReference>
<dbReference type="PRINTS" id="PR00985">
    <property type="entry name" value="TRNASYNTHLEU"/>
</dbReference>
<dbReference type="SUPFAM" id="SSF47323">
    <property type="entry name" value="Anticodon-binding domain of a subclass of class I aminoacyl-tRNA synthetases"/>
    <property type="match status" value="1"/>
</dbReference>
<dbReference type="SUPFAM" id="SSF52374">
    <property type="entry name" value="Nucleotidylyl transferase"/>
    <property type="match status" value="1"/>
</dbReference>
<dbReference type="SUPFAM" id="SSF50677">
    <property type="entry name" value="ValRS/IleRS/LeuRS editing domain"/>
    <property type="match status" value="1"/>
</dbReference>
<accession>A7G9T9</accession>
<evidence type="ECO:0000255" key="1">
    <source>
        <dbReference type="HAMAP-Rule" id="MF_00049"/>
    </source>
</evidence>